<keyword id="KW-0963">Cytoplasm</keyword>
<keyword id="KW-0456">Lyase</keyword>
<keyword id="KW-0460">Magnesium</keyword>
<keyword id="KW-0479">Metal-binding</keyword>
<name>TPS3_CANOD</name>
<evidence type="ECO:0000250" key="1">
    <source>
        <dbReference type="UniProtKB" id="Q40577"/>
    </source>
</evidence>
<evidence type="ECO:0000269" key="2">
    <source>
    </source>
</evidence>
<evidence type="ECO:0000303" key="3">
    <source>
    </source>
</evidence>
<evidence type="ECO:0000305" key="4"/>
<evidence type="ECO:0000305" key="5">
    <source>
    </source>
</evidence>
<organism>
    <name type="scientific">Cananga odorata</name>
    <name type="common">Ylang-ylang tree</name>
    <name type="synonym">Uvaria odorata</name>
    <dbReference type="NCBI Taxonomy" id="13393"/>
    <lineage>
        <taxon>Eukaryota</taxon>
        <taxon>Viridiplantae</taxon>
        <taxon>Streptophyta</taxon>
        <taxon>Embryophyta</taxon>
        <taxon>Tracheophyta</taxon>
        <taxon>Spermatophyta</taxon>
        <taxon>Magnoliopsida</taxon>
        <taxon>Magnoliidae</taxon>
        <taxon>Magnoliales</taxon>
        <taxon>Annonaceae</taxon>
        <taxon>Ambavioideae</taxon>
        <taxon>Cananga</taxon>
    </lineage>
</organism>
<reference key="1">
    <citation type="journal article" date="2015" name="J. Exp. Bot.">
        <title>The floral transcriptome of ylang ylang (Cananga odorata var. fruticosa) uncovers biosynthetic pathways for volatile organic compounds and a multifunctional and novel sesquiterpene synthase.</title>
        <authorList>
            <person name="Jin J."/>
            <person name="Kim M.J."/>
            <person name="Dhandapani S."/>
            <person name="Tjhang J.G."/>
            <person name="Yin J.L."/>
            <person name="Wong L."/>
            <person name="Sarojam R."/>
            <person name="Chua N.H."/>
            <person name="Jang I.C."/>
        </authorList>
    </citation>
    <scope>NUCLEOTIDE SEQUENCE [MRNA]</scope>
    <scope>FUNCTION</scope>
    <scope>CATALYTIC ACTIVITY</scope>
    <scope>SUBCELLULAR LOCATION</scope>
    <scope>MOTIF</scope>
</reference>
<gene>
    <name evidence="3" type="primary">TPS3</name>
</gene>
<protein>
    <recommendedName>
        <fullName evidence="4">Sesquiterpene synthase TPS3</fullName>
    </recommendedName>
    <alternativeName>
        <fullName evidence="4">Alpha-bergamotene synthase TPS3</fullName>
        <ecNumber evidence="2">4.3.2.-</ecNumber>
    </alternativeName>
    <alternativeName>
        <fullName evidence="3">Terpene synthase 3</fullName>
        <shortName evidence="3">CoTPS3</shortName>
    </alternativeName>
</protein>
<proteinExistence type="evidence at protein level"/>
<dbReference type="EC" id="4.3.2.-" evidence="2"/>
<dbReference type="EMBL" id="MN230107">
    <property type="protein sequence ID" value="QMW48844.1"/>
    <property type="molecule type" value="mRNA"/>
</dbReference>
<dbReference type="SMR" id="A0A7G5KLV2"/>
<dbReference type="UniPathway" id="UPA00213"/>
<dbReference type="GO" id="GO:0005737">
    <property type="term" value="C:cytoplasm"/>
    <property type="evidence" value="ECO:0007669"/>
    <property type="project" value="UniProtKB-SubCell"/>
</dbReference>
<dbReference type="GO" id="GO:0000287">
    <property type="term" value="F:magnesium ion binding"/>
    <property type="evidence" value="ECO:0007669"/>
    <property type="project" value="InterPro"/>
</dbReference>
<dbReference type="GO" id="GO:0010333">
    <property type="term" value="F:terpene synthase activity"/>
    <property type="evidence" value="ECO:0007669"/>
    <property type="project" value="InterPro"/>
</dbReference>
<dbReference type="GO" id="GO:0016102">
    <property type="term" value="P:diterpenoid biosynthetic process"/>
    <property type="evidence" value="ECO:0007669"/>
    <property type="project" value="InterPro"/>
</dbReference>
<dbReference type="CDD" id="cd00684">
    <property type="entry name" value="Terpene_cyclase_plant_C1"/>
    <property type="match status" value="1"/>
</dbReference>
<dbReference type="FunFam" id="1.10.600.10:FF:000007">
    <property type="entry name" value="Isoprene synthase, chloroplastic"/>
    <property type="match status" value="1"/>
</dbReference>
<dbReference type="FunFam" id="1.50.10.130:FF:000001">
    <property type="entry name" value="Isoprene synthase, chloroplastic"/>
    <property type="match status" value="1"/>
</dbReference>
<dbReference type="Gene3D" id="1.10.600.10">
    <property type="entry name" value="Farnesyl Diphosphate Synthase"/>
    <property type="match status" value="1"/>
</dbReference>
<dbReference type="Gene3D" id="1.50.10.130">
    <property type="entry name" value="Terpene synthase, N-terminal domain"/>
    <property type="match status" value="1"/>
</dbReference>
<dbReference type="InterPro" id="IPR008949">
    <property type="entry name" value="Isoprenoid_synthase_dom_sf"/>
</dbReference>
<dbReference type="InterPro" id="IPR034741">
    <property type="entry name" value="Terpene_cyclase-like_1_C"/>
</dbReference>
<dbReference type="InterPro" id="IPR044814">
    <property type="entry name" value="Terpene_cyclase_plant_C1"/>
</dbReference>
<dbReference type="InterPro" id="IPR001906">
    <property type="entry name" value="Terpene_synth_N"/>
</dbReference>
<dbReference type="InterPro" id="IPR036965">
    <property type="entry name" value="Terpene_synth_N_sf"/>
</dbReference>
<dbReference type="InterPro" id="IPR050148">
    <property type="entry name" value="Terpene_synthase-like"/>
</dbReference>
<dbReference type="InterPro" id="IPR005630">
    <property type="entry name" value="Terpene_synthase_metal-bd"/>
</dbReference>
<dbReference type="InterPro" id="IPR008930">
    <property type="entry name" value="Terpenoid_cyclase/PrenylTrfase"/>
</dbReference>
<dbReference type="PANTHER" id="PTHR31225">
    <property type="entry name" value="OS04G0344100 PROTEIN-RELATED"/>
    <property type="match status" value="1"/>
</dbReference>
<dbReference type="PANTHER" id="PTHR31225:SF252">
    <property type="entry name" value="TERPENE SYNTHASE 12-RELATED"/>
    <property type="match status" value="1"/>
</dbReference>
<dbReference type="Pfam" id="PF01397">
    <property type="entry name" value="Terpene_synth"/>
    <property type="match status" value="1"/>
</dbReference>
<dbReference type="Pfam" id="PF03936">
    <property type="entry name" value="Terpene_synth_C"/>
    <property type="match status" value="1"/>
</dbReference>
<dbReference type="SFLD" id="SFLDS00005">
    <property type="entry name" value="Isoprenoid_Synthase_Type_I"/>
    <property type="match status" value="1"/>
</dbReference>
<dbReference type="SFLD" id="SFLDG01019">
    <property type="entry name" value="Terpene_Cyclase_Like_1_C_Termi"/>
    <property type="match status" value="1"/>
</dbReference>
<dbReference type="SUPFAM" id="SSF48239">
    <property type="entry name" value="Terpenoid cyclases/Protein prenyltransferases"/>
    <property type="match status" value="1"/>
</dbReference>
<dbReference type="SUPFAM" id="SSF48576">
    <property type="entry name" value="Terpenoid synthases"/>
    <property type="match status" value="1"/>
</dbReference>
<sequence length="547" mass="63739">MNPVSLLSLSGERRSANWKPSSWDSNQIHQSLKSDFNDLQEKWHTELKQAVEQMLEAVAEPLQKLTLIDDIQRLGVAYRFEKQIDDALSSIYSNYAAEVSSKKDLLAASLYFRLLRQHGCYVSPDIFIQFKDEAGQFKASLGDDVEGLLSLYEASYLGIKGETILDDAKAFSTSTLENLMPHVEADIASRISHALHLPLHWNMRRMEARLYIDVYRENKKRRNDNLLEFARLDFNMLQVIHQRDLKDVSFWWDFLDLPRKLGFIRDRLMESFIFSVGLNFEPQFSECRKAATKDILLITVLDDIYDIYGSMDEVEIFNNAVNRWDLGAVDELPEYMQLCYLGLLNSVNELAYVTMKDTGRNVLDFLKKLWKRHFNAAVKESRWFHRQYTPTLEEYMENAQISIGAPLVLTHAYVKMLKYMPNEDVNHVDKYLKLISMMCYVFRLYDDWGTSKAEIERGDVPKAIQCYMHEAKVSEEIAREHIKNIINERWKELNEECLKATDLNRKFVAAVLDALRAAAFFYHDRDGFGEPDHKFKSQAMALFSQQV</sequence>
<accession>A0A7G5KLV2</accession>
<comment type="function">
    <text evidence="2">Sesquiterpene synthase involved in the biosynthesis of volatile organic compounds (PubMed:25956881). Mediates the conversion of (2E,6E)-farnesyl diphosphate (FPP) into alpha-bergamotene (PubMed:25956881). Does not use (2E)-geranyl diphosphate (GPP) as substrate (PubMed:25956881).</text>
</comment>
<comment type="catalytic activity">
    <reaction evidence="2">
        <text>(2E,6E)-farnesyl diphosphate = (1S,5S,6R)-alpha-bergamotene + diphosphate</text>
        <dbReference type="Rhea" id="RHEA:31427"/>
        <dbReference type="ChEBI" id="CHEBI:33019"/>
        <dbReference type="ChEBI" id="CHEBI:62756"/>
        <dbReference type="ChEBI" id="CHEBI:175763"/>
    </reaction>
    <physiologicalReaction direction="left-to-right" evidence="2">
        <dbReference type="Rhea" id="RHEA:31428"/>
    </physiologicalReaction>
</comment>
<comment type="cofactor">
    <cofactor evidence="1">
        <name>Mg(2+)</name>
        <dbReference type="ChEBI" id="CHEBI:18420"/>
    </cofactor>
    <text evidence="1">Binds 3 Mg(2+) ions per subunit.</text>
</comment>
<comment type="pathway">
    <text evidence="4">Secondary metabolite biosynthesis; terpenoid biosynthesis.</text>
</comment>
<comment type="subunit">
    <text evidence="1">Monomer.</text>
</comment>
<comment type="subcellular location">
    <subcellularLocation>
        <location evidence="2">Cytoplasm</location>
    </subcellularLocation>
</comment>
<comment type="domain">
    <text evidence="5">The Asp-Asp-Xaa-Xaa-Asp/Glu (DDXXD/E) motif is important for the catalytic activity, presumably through binding to Mg(2+).</text>
</comment>
<comment type="similarity">
    <text evidence="4">Belongs to the terpene synthase family. Tpsb subfamily.</text>
</comment>
<feature type="chain" id="PRO_0000455180" description="Sesquiterpene synthase TPS3">
    <location>
        <begin position="1"/>
        <end position="547"/>
    </location>
</feature>
<feature type="short sequence motif" description="DDXXD motif" evidence="5">
    <location>
        <begin position="302"/>
        <end position="306"/>
    </location>
</feature>
<feature type="binding site" evidence="1">
    <location>
        <position position="265"/>
    </location>
    <ligand>
        <name>(2E,6E)-farnesyl diphosphate</name>
        <dbReference type="ChEBI" id="CHEBI:175763"/>
    </ligand>
</feature>
<feature type="binding site" evidence="1">
    <location>
        <position position="302"/>
    </location>
    <ligand>
        <name>(2E,6E)-farnesyl diphosphate</name>
        <dbReference type="ChEBI" id="CHEBI:175763"/>
    </ligand>
</feature>
<feature type="binding site" evidence="1">
    <location>
        <position position="302"/>
    </location>
    <ligand>
        <name>Mg(2+)</name>
        <dbReference type="ChEBI" id="CHEBI:18420"/>
        <label>1</label>
    </ligand>
</feature>
<feature type="binding site" evidence="1">
    <location>
        <position position="302"/>
    </location>
    <ligand>
        <name>Mg(2+)</name>
        <dbReference type="ChEBI" id="CHEBI:18420"/>
        <label>2</label>
    </ligand>
</feature>
<feature type="binding site" evidence="1">
    <location>
        <position position="306"/>
    </location>
    <ligand>
        <name>(2E,6E)-farnesyl diphosphate</name>
        <dbReference type="ChEBI" id="CHEBI:175763"/>
    </ligand>
</feature>
<feature type="binding site" evidence="1">
    <location>
        <position position="306"/>
    </location>
    <ligand>
        <name>Mg(2+)</name>
        <dbReference type="ChEBI" id="CHEBI:18420"/>
        <label>1</label>
    </ligand>
</feature>
<feature type="binding site" evidence="1">
    <location>
        <position position="306"/>
    </location>
    <ligand>
        <name>Mg(2+)</name>
        <dbReference type="ChEBI" id="CHEBI:18420"/>
        <label>2</label>
    </ligand>
</feature>
<feature type="binding site" evidence="1">
    <location>
        <position position="443"/>
    </location>
    <ligand>
        <name>(2E,6E)-farnesyl diphosphate</name>
        <dbReference type="ChEBI" id="CHEBI:175763"/>
    </ligand>
</feature>
<feature type="binding site" evidence="1">
    <location>
        <position position="446"/>
    </location>
    <ligand>
        <name>(2E,6E)-farnesyl diphosphate</name>
        <dbReference type="ChEBI" id="CHEBI:175763"/>
    </ligand>
</feature>
<feature type="binding site" evidence="1">
    <location>
        <position position="446"/>
    </location>
    <ligand>
        <name>Mg(2+)</name>
        <dbReference type="ChEBI" id="CHEBI:18420"/>
        <label>3</label>
    </ligand>
</feature>
<feature type="binding site" evidence="1">
    <location>
        <position position="450"/>
    </location>
    <ligand>
        <name>Mg(2+)</name>
        <dbReference type="ChEBI" id="CHEBI:18420"/>
        <label>3</label>
    </ligand>
</feature>
<feature type="binding site" evidence="1">
    <location>
        <position position="454"/>
    </location>
    <ligand>
        <name>Mg(2+)</name>
        <dbReference type="ChEBI" id="CHEBI:18420"/>
        <label>3</label>
    </ligand>
</feature>